<accession>Q0W932</accession>
<protein>
    <recommendedName>
        <fullName evidence="1">N-acetyl-gamma-glutamyl-phosphate reductase</fullName>
        <shortName evidence="1">AGPR</shortName>
        <ecNumber evidence="1">1.2.1.38</ecNumber>
    </recommendedName>
    <alternativeName>
        <fullName evidence="1">N-acetyl-glutamate semialdehyde dehydrogenase</fullName>
        <shortName evidence="1">NAGSA dehydrogenase</shortName>
    </alternativeName>
</protein>
<reference key="1">
    <citation type="journal article" date="2006" name="Science">
        <title>Genome of rice cluster I archaea -- the key methane producers in the rice rhizosphere.</title>
        <authorList>
            <person name="Erkel C."/>
            <person name="Kube M."/>
            <person name="Reinhardt R."/>
            <person name="Liesack W."/>
        </authorList>
    </citation>
    <scope>NUCLEOTIDE SEQUENCE [LARGE SCALE GENOMIC DNA]</scope>
    <source>
        <strain>DSM 22066 / NBRC 105507 / MRE50</strain>
    </source>
</reference>
<name>ARGC_METAR</name>
<gene>
    <name evidence="1" type="primary">argC</name>
    <name type="ordered locus">UNCMA_30760</name>
    <name type="ORF">LRC63</name>
</gene>
<sequence length="334" mass="36714">MLKIGIVGGTGYTGGELLRLLSIHPLAEVTVVTSRKQAGQPVDTVHPNLKSLTDLKFEDPDPAKIAERCDVVFTAVPHGAAMAVVPELLKYGLRVIDLSADYRLPTEKFEQVYNKKHLDPREAVYGLPELHPEVKDATLIANPGCYPTGANLACAPLIAQGLVNRAVVDSKSGISGSGQDPTEGTHYPNVTQNVRPYNLTTHRHKAEIEQEMLRLNNSTRIHFTPHVIPSTRGIMTTAHLFVDEPLTTDQVQTIYDEFYKNKPFVRLQKPSLANVRGSNFCDIAFEVEKDSDRIVVVSAIDNMVKGASGQAIQNMNLMYGFDERTGLWTSGLSP</sequence>
<proteinExistence type="inferred from homology"/>
<keyword id="KW-0028">Amino-acid biosynthesis</keyword>
<keyword id="KW-0055">Arginine biosynthesis</keyword>
<keyword id="KW-0963">Cytoplasm</keyword>
<keyword id="KW-0521">NADP</keyword>
<keyword id="KW-0560">Oxidoreductase</keyword>
<keyword id="KW-1185">Reference proteome</keyword>
<organism>
    <name type="scientific">Methanocella arvoryzae (strain DSM 22066 / NBRC 105507 / MRE50)</name>
    <dbReference type="NCBI Taxonomy" id="351160"/>
    <lineage>
        <taxon>Archaea</taxon>
        <taxon>Methanobacteriati</taxon>
        <taxon>Methanobacteriota</taxon>
        <taxon>Stenosarchaea group</taxon>
        <taxon>Methanomicrobia</taxon>
        <taxon>Methanocellales</taxon>
        <taxon>Methanocellaceae</taxon>
        <taxon>Methanocella</taxon>
    </lineage>
</organism>
<dbReference type="EC" id="1.2.1.38" evidence="1"/>
<dbReference type="EMBL" id="AM114193">
    <property type="protein sequence ID" value="CAJ35094.1"/>
    <property type="molecule type" value="Genomic_DNA"/>
</dbReference>
<dbReference type="RefSeq" id="WP_012037391.1">
    <property type="nucleotide sequence ID" value="NC_009464.1"/>
</dbReference>
<dbReference type="SMR" id="Q0W932"/>
<dbReference type="STRING" id="351160.LRC63"/>
<dbReference type="GeneID" id="5144783"/>
<dbReference type="KEGG" id="rci:LRC63"/>
<dbReference type="PATRIC" id="fig|351160.9.peg.3170"/>
<dbReference type="eggNOG" id="arCOG00495">
    <property type="taxonomic scope" value="Archaea"/>
</dbReference>
<dbReference type="OrthoDB" id="372053at2157"/>
<dbReference type="UniPathway" id="UPA00068">
    <property type="reaction ID" value="UER00108"/>
</dbReference>
<dbReference type="Proteomes" id="UP000000663">
    <property type="component" value="Chromosome"/>
</dbReference>
<dbReference type="GO" id="GO:0005737">
    <property type="term" value="C:cytoplasm"/>
    <property type="evidence" value="ECO:0007669"/>
    <property type="project" value="UniProtKB-SubCell"/>
</dbReference>
<dbReference type="GO" id="GO:0003942">
    <property type="term" value="F:N-acetyl-gamma-glutamyl-phosphate reductase activity"/>
    <property type="evidence" value="ECO:0007669"/>
    <property type="project" value="UniProtKB-UniRule"/>
</dbReference>
<dbReference type="GO" id="GO:0051287">
    <property type="term" value="F:NAD binding"/>
    <property type="evidence" value="ECO:0007669"/>
    <property type="project" value="InterPro"/>
</dbReference>
<dbReference type="GO" id="GO:0070401">
    <property type="term" value="F:NADP+ binding"/>
    <property type="evidence" value="ECO:0007669"/>
    <property type="project" value="InterPro"/>
</dbReference>
<dbReference type="GO" id="GO:0006526">
    <property type="term" value="P:L-arginine biosynthetic process"/>
    <property type="evidence" value="ECO:0007669"/>
    <property type="project" value="UniProtKB-UniRule"/>
</dbReference>
<dbReference type="CDD" id="cd23934">
    <property type="entry name" value="AGPR_1_C"/>
    <property type="match status" value="1"/>
</dbReference>
<dbReference type="CDD" id="cd17895">
    <property type="entry name" value="AGPR_1_N"/>
    <property type="match status" value="1"/>
</dbReference>
<dbReference type="FunFam" id="3.30.360.10:FF:000014">
    <property type="entry name" value="N-acetyl-gamma-glutamyl-phosphate reductase"/>
    <property type="match status" value="1"/>
</dbReference>
<dbReference type="Gene3D" id="3.30.360.10">
    <property type="entry name" value="Dihydrodipicolinate Reductase, domain 2"/>
    <property type="match status" value="1"/>
</dbReference>
<dbReference type="Gene3D" id="3.40.50.720">
    <property type="entry name" value="NAD(P)-binding Rossmann-like Domain"/>
    <property type="match status" value="1"/>
</dbReference>
<dbReference type="HAMAP" id="MF_00150">
    <property type="entry name" value="ArgC_type1"/>
    <property type="match status" value="1"/>
</dbReference>
<dbReference type="InterPro" id="IPR023013">
    <property type="entry name" value="AGPR_AS"/>
</dbReference>
<dbReference type="InterPro" id="IPR000706">
    <property type="entry name" value="AGPR_type-1"/>
</dbReference>
<dbReference type="InterPro" id="IPR036291">
    <property type="entry name" value="NAD(P)-bd_dom_sf"/>
</dbReference>
<dbReference type="InterPro" id="IPR050085">
    <property type="entry name" value="NAGSA_dehydrogenase"/>
</dbReference>
<dbReference type="InterPro" id="IPR000534">
    <property type="entry name" value="Semialdehyde_DH_NAD-bd"/>
</dbReference>
<dbReference type="NCBIfam" id="TIGR01850">
    <property type="entry name" value="argC"/>
    <property type="match status" value="1"/>
</dbReference>
<dbReference type="PANTHER" id="PTHR32338:SF10">
    <property type="entry name" value="N-ACETYL-GAMMA-GLUTAMYL-PHOSPHATE REDUCTASE, CHLOROPLASTIC-RELATED"/>
    <property type="match status" value="1"/>
</dbReference>
<dbReference type="PANTHER" id="PTHR32338">
    <property type="entry name" value="N-ACETYL-GAMMA-GLUTAMYL-PHOSPHATE REDUCTASE, CHLOROPLASTIC-RELATED-RELATED"/>
    <property type="match status" value="1"/>
</dbReference>
<dbReference type="Pfam" id="PF01118">
    <property type="entry name" value="Semialdhyde_dh"/>
    <property type="match status" value="1"/>
</dbReference>
<dbReference type="Pfam" id="PF22698">
    <property type="entry name" value="Semialdhyde_dhC_1"/>
    <property type="match status" value="1"/>
</dbReference>
<dbReference type="SMART" id="SM00859">
    <property type="entry name" value="Semialdhyde_dh"/>
    <property type="match status" value="1"/>
</dbReference>
<dbReference type="SUPFAM" id="SSF55347">
    <property type="entry name" value="Glyceraldehyde-3-phosphate dehydrogenase-like, C-terminal domain"/>
    <property type="match status" value="1"/>
</dbReference>
<dbReference type="SUPFAM" id="SSF51735">
    <property type="entry name" value="NAD(P)-binding Rossmann-fold domains"/>
    <property type="match status" value="1"/>
</dbReference>
<dbReference type="PROSITE" id="PS01224">
    <property type="entry name" value="ARGC"/>
    <property type="match status" value="1"/>
</dbReference>
<comment type="function">
    <text evidence="1">Catalyzes the NADPH-dependent reduction of N-acetyl-5-glutamyl phosphate to yield N-acetyl-L-glutamate 5-semialdehyde.</text>
</comment>
<comment type="catalytic activity">
    <reaction evidence="1">
        <text>N-acetyl-L-glutamate 5-semialdehyde + phosphate + NADP(+) = N-acetyl-L-glutamyl 5-phosphate + NADPH + H(+)</text>
        <dbReference type="Rhea" id="RHEA:21588"/>
        <dbReference type="ChEBI" id="CHEBI:15378"/>
        <dbReference type="ChEBI" id="CHEBI:29123"/>
        <dbReference type="ChEBI" id="CHEBI:43474"/>
        <dbReference type="ChEBI" id="CHEBI:57783"/>
        <dbReference type="ChEBI" id="CHEBI:57936"/>
        <dbReference type="ChEBI" id="CHEBI:58349"/>
        <dbReference type="EC" id="1.2.1.38"/>
    </reaction>
</comment>
<comment type="pathway">
    <text evidence="1">Amino-acid biosynthesis; L-arginine biosynthesis; N(2)-acetyl-L-ornithine from L-glutamate: step 3/4.</text>
</comment>
<comment type="subcellular location">
    <subcellularLocation>
        <location evidence="1">Cytoplasm</location>
    </subcellularLocation>
</comment>
<comment type="similarity">
    <text evidence="1">Belongs to the NAGSA dehydrogenase family. Type 1 subfamily.</text>
</comment>
<feature type="chain" id="PRO_1000011080" description="N-acetyl-gamma-glutamyl-phosphate reductase">
    <location>
        <begin position="1"/>
        <end position="334"/>
    </location>
</feature>
<feature type="region of interest" description="Disordered" evidence="2">
    <location>
        <begin position="173"/>
        <end position="192"/>
    </location>
</feature>
<feature type="active site" evidence="1">
    <location>
        <position position="145"/>
    </location>
</feature>
<evidence type="ECO:0000255" key="1">
    <source>
        <dbReference type="HAMAP-Rule" id="MF_00150"/>
    </source>
</evidence>
<evidence type="ECO:0000256" key="2">
    <source>
        <dbReference type="SAM" id="MobiDB-lite"/>
    </source>
</evidence>